<evidence type="ECO:0000255" key="1">
    <source>
        <dbReference type="HAMAP-Rule" id="MF_00472"/>
    </source>
</evidence>
<organism>
    <name type="scientific">Shigella dysenteriae serotype 1 (strain Sd197)</name>
    <dbReference type="NCBI Taxonomy" id="300267"/>
    <lineage>
        <taxon>Bacteria</taxon>
        <taxon>Pseudomonadati</taxon>
        <taxon>Pseudomonadota</taxon>
        <taxon>Gammaproteobacteria</taxon>
        <taxon>Enterobacterales</taxon>
        <taxon>Enterobacteriaceae</taxon>
        <taxon>Shigella</taxon>
    </lineage>
</organism>
<name>UBIG_SHIDS</name>
<keyword id="KW-0489">Methyltransferase</keyword>
<keyword id="KW-1185">Reference proteome</keyword>
<keyword id="KW-0949">S-adenosyl-L-methionine</keyword>
<keyword id="KW-0808">Transferase</keyword>
<keyword id="KW-0831">Ubiquinone biosynthesis</keyword>
<comment type="function">
    <text evidence="1">O-methyltransferase that catalyzes the 2 O-methylation steps in the ubiquinone biosynthetic pathway.</text>
</comment>
<comment type="catalytic activity">
    <reaction evidence="1">
        <text>a 3-demethylubiquinol + S-adenosyl-L-methionine = a ubiquinol + S-adenosyl-L-homocysteine + H(+)</text>
        <dbReference type="Rhea" id="RHEA:44380"/>
        <dbReference type="Rhea" id="RHEA-COMP:9566"/>
        <dbReference type="Rhea" id="RHEA-COMP:10914"/>
        <dbReference type="ChEBI" id="CHEBI:15378"/>
        <dbReference type="ChEBI" id="CHEBI:17976"/>
        <dbReference type="ChEBI" id="CHEBI:57856"/>
        <dbReference type="ChEBI" id="CHEBI:59789"/>
        <dbReference type="ChEBI" id="CHEBI:84422"/>
        <dbReference type="EC" id="2.1.1.64"/>
    </reaction>
</comment>
<comment type="catalytic activity">
    <reaction evidence="1">
        <text>a 3-(all-trans-polyprenyl)benzene-1,2-diol + S-adenosyl-L-methionine = a 2-methoxy-6-(all-trans-polyprenyl)phenol + S-adenosyl-L-homocysteine + H(+)</text>
        <dbReference type="Rhea" id="RHEA:31411"/>
        <dbReference type="Rhea" id="RHEA-COMP:9550"/>
        <dbReference type="Rhea" id="RHEA-COMP:9551"/>
        <dbReference type="ChEBI" id="CHEBI:15378"/>
        <dbReference type="ChEBI" id="CHEBI:57856"/>
        <dbReference type="ChEBI" id="CHEBI:59789"/>
        <dbReference type="ChEBI" id="CHEBI:62729"/>
        <dbReference type="ChEBI" id="CHEBI:62731"/>
        <dbReference type="EC" id="2.1.1.222"/>
    </reaction>
</comment>
<comment type="pathway">
    <text evidence="1">Cofactor biosynthesis; ubiquinone biosynthesis.</text>
</comment>
<comment type="similarity">
    <text evidence="1">Belongs to the methyltransferase superfamily. UbiG/COQ3 family.</text>
</comment>
<dbReference type="EC" id="2.1.1.222" evidence="1"/>
<dbReference type="EC" id="2.1.1.64" evidence="1"/>
<dbReference type="EMBL" id="CP000034">
    <property type="protein sequence ID" value="ABB62497.1"/>
    <property type="molecule type" value="Genomic_DNA"/>
</dbReference>
<dbReference type="RefSeq" id="WP_000990765.1">
    <property type="nucleotide sequence ID" value="NC_007606.1"/>
</dbReference>
<dbReference type="RefSeq" id="YP_403988.1">
    <property type="nucleotide sequence ID" value="NC_007606.1"/>
</dbReference>
<dbReference type="SMR" id="Q32DV8"/>
<dbReference type="STRING" id="300267.SDY_2424"/>
<dbReference type="EnsemblBacteria" id="ABB62497">
    <property type="protein sequence ID" value="ABB62497"/>
    <property type="gene ID" value="SDY_2424"/>
</dbReference>
<dbReference type="GeneID" id="75206477"/>
<dbReference type="KEGG" id="sdy:SDY_2424"/>
<dbReference type="PATRIC" id="fig|300267.13.peg.2922"/>
<dbReference type="HOGENOM" id="CLU_042432_5_0_6"/>
<dbReference type="UniPathway" id="UPA00232"/>
<dbReference type="Proteomes" id="UP000002716">
    <property type="component" value="Chromosome"/>
</dbReference>
<dbReference type="GO" id="GO:0102208">
    <property type="term" value="F:2-polyprenyl-6-hydroxyphenol methylase activity"/>
    <property type="evidence" value="ECO:0007669"/>
    <property type="project" value="UniProtKB-EC"/>
</dbReference>
<dbReference type="GO" id="GO:0061542">
    <property type="term" value="F:3-demethylubiquinol 3-O-methyltransferase activity"/>
    <property type="evidence" value="ECO:0007669"/>
    <property type="project" value="UniProtKB-UniRule"/>
</dbReference>
<dbReference type="GO" id="GO:0010420">
    <property type="term" value="F:polyprenyldihydroxybenzoate methyltransferase activity"/>
    <property type="evidence" value="ECO:0007669"/>
    <property type="project" value="InterPro"/>
</dbReference>
<dbReference type="GO" id="GO:0032259">
    <property type="term" value="P:methylation"/>
    <property type="evidence" value="ECO:0007669"/>
    <property type="project" value="UniProtKB-KW"/>
</dbReference>
<dbReference type="CDD" id="cd02440">
    <property type="entry name" value="AdoMet_MTases"/>
    <property type="match status" value="1"/>
</dbReference>
<dbReference type="FunFam" id="3.40.50.150:FF:000028">
    <property type="entry name" value="Ubiquinone biosynthesis O-methyltransferase"/>
    <property type="match status" value="1"/>
</dbReference>
<dbReference type="Gene3D" id="3.40.50.150">
    <property type="entry name" value="Vaccinia Virus protein VP39"/>
    <property type="match status" value="1"/>
</dbReference>
<dbReference type="HAMAP" id="MF_00472">
    <property type="entry name" value="UbiG"/>
    <property type="match status" value="1"/>
</dbReference>
<dbReference type="InterPro" id="IPR029063">
    <property type="entry name" value="SAM-dependent_MTases_sf"/>
</dbReference>
<dbReference type="InterPro" id="IPR010233">
    <property type="entry name" value="UbiG_MeTrfase"/>
</dbReference>
<dbReference type="NCBIfam" id="TIGR01983">
    <property type="entry name" value="UbiG"/>
    <property type="match status" value="1"/>
</dbReference>
<dbReference type="PANTHER" id="PTHR43464">
    <property type="entry name" value="METHYLTRANSFERASE"/>
    <property type="match status" value="1"/>
</dbReference>
<dbReference type="PANTHER" id="PTHR43464:SF19">
    <property type="entry name" value="UBIQUINONE BIOSYNTHESIS O-METHYLTRANSFERASE, MITOCHONDRIAL"/>
    <property type="match status" value="1"/>
</dbReference>
<dbReference type="Pfam" id="PF13489">
    <property type="entry name" value="Methyltransf_23"/>
    <property type="match status" value="1"/>
</dbReference>
<dbReference type="SUPFAM" id="SSF53335">
    <property type="entry name" value="S-adenosyl-L-methionine-dependent methyltransferases"/>
    <property type="match status" value="1"/>
</dbReference>
<protein>
    <recommendedName>
        <fullName evidence="1">Ubiquinone biosynthesis O-methyltransferase</fullName>
    </recommendedName>
    <alternativeName>
        <fullName evidence="1">2-polyprenyl-6-hydroxyphenol methylase</fullName>
        <ecNumber evidence="1">2.1.1.222</ecNumber>
    </alternativeName>
    <alternativeName>
        <fullName evidence="1">3-demethylubiquinone 3-O-methyltransferase</fullName>
        <ecNumber evidence="1">2.1.1.64</ecNumber>
    </alternativeName>
</protein>
<reference key="1">
    <citation type="journal article" date="2005" name="Nucleic Acids Res.">
        <title>Genome dynamics and diversity of Shigella species, the etiologic agents of bacillary dysentery.</title>
        <authorList>
            <person name="Yang F."/>
            <person name="Yang J."/>
            <person name="Zhang X."/>
            <person name="Chen L."/>
            <person name="Jiang Y."/>
            <person name="Yan Y."/>
            <person name="Tang X."/>
            <person name="Wang J."/>
            <person name="Xiong Z."/>
            <person name="Dong J."/>
            <person name="Xue Y."/>
            <person name="Zhu Y."/>
            <person name="Xu X."/>
            <person name="Sun L."/>
            <person name="Chen S."/>
            <person name="Nie H."/>
            <person name="Peng J."/>
            <person name="Xu J."/>
            <person name="Wang Y."/>
            <person name="Yuan Z."/>
            <person name="Wen Y."/>
            <person name="Yao Z."/>
            <person name="Shen Y."/>
            <person name="Qiang B."/>
            <person name="Hou Y."/>
            <person name="Yu J."/>
            <person name="Jin Q."/>
        </authorList>
    </citation>
    <scope>NUCLEOTIDE SEQUENCE [LARGE SCALE GENOMIC DNA]</scope>
    <source>
        <strain>Sd197</strain>
    </source>
</reference>
<proteinExistence type="inferred from homology"/>
<feature type="chain" id="PRO_0000241737" description="Ubiquinone biosynthesis O-methyltransferase">
    <location>
        <begin position="1"/>
        <end position="240"/>
    </location>
</feature>
<feature type="binding site" evidence="1">
    <location>
        <position position="44"/>
    </location>
    <ligand>
        <name>S-adenosyl-L-methionine</name>
        <dbReference type="ChEBI" id="CHEBI:59789"/>
    </ligand>
</feature>
<feature type="binding site" evidence="1">
    <location>
        <position position="64"/>
    </location>
    <ligand>
        <name>S-adenosyl-L-methionine</name>
        <dbReference type="ChEBI" id="CHEBI:59789"/>
    </ligand>
</feature>
<feature type="binding site" evidence="1">
    <location>
        <position position="85"/>
    </location>
    <ligand>
        <name>S-adenosyl-L-methionine</name>
        <dbReference type="ChEBI" id="CHEBI:59789"/>
    </ligand>
</feature>
<feature type="binding site" evidence="1">
    <location>
        <position position="129"/>
    </location>
    <ligand>
        <name>S-adenosyl-L-methionine</name>
        <dbReference type="ChEBI" id="CHEBI:59789"/>
    </ligand>
</feature>
<sequence>MNAEKSPVNHNVDHEEIAKFEAVASRWWDLEGEFKPLHRINPLRLGYIAERAGGLFGKKVLDVGCGGGILAESMAREGATVTGLDMGFEPLQVAKLHALESGIQVDYVQETVEEHAAKHAGQYDVVTCMEMLEHVPDPQSVVRACAQLVKPGGDVFFSTLNRNGKSWLMAVVGAEYILRMVPKGTHDVKKFIKPAELLGWVDQTSLKERHITGLHYNPITNTFKLGPGVDVNYMLHTQNK</sequence>
<accession>Q32DV8</accession>
<gene>
    <name evidence="1" type="primary">ubiG</name>
    <name type="ordered locus">SDY_2424</name>
</gene>